<reference evidence="5" key="1">
    <citation type="submission" date="2009-04" db="UniProtKB">
        <title>Identification of peptides from Phyllomedusa burmesteri skin secretomics by nano LC MS/MS.</title>
        <authorList>
            <person name="Conceicao K."/>
            <person name="Klitzke C.F."/>
            <person name="Brito R.C."/>
            <person name="Andrade D.F."/>
            <person name="Junca F.A."/>
            <person name="Biondi I."/>
            <person name="Lopes-Ferreira M."/>
        </authorList>
    </citation>
    <scope>PROTEIN SEQUENCE</scope>
    <scope>SUBCELLULAR LOCATION</scope>
    <scope>TISSUE SPECIFICITY</scope>
    <scope>MASS SPECTROMETRY</scope>
    <source>
        <tissue evidence="3">Skin secretion</tissue>
    </source>
</reference>
<evidence type="ECO:0000250" key="1">
    <source>
        <dbReference type="UniProtKB" id="P80279"/>
    </source>
</evidence>
<evidence type="ECO:0000255" key="2"/>
<evidence type="ECO:0000269" key="3">
    <source ref="1"/>
</evidence>
<evidence type="ECO:0000303" key="4">
    <source ref="1"/>
</evidence>
<evidence type="ECO:0000305" key="5"/>
<name>DMS3_PHYBU</name>
<accession>P86281</accession>
<feature type="peptide" id="PRO_0000378909" description="Dermaseptin III-like peptide" evidence="3">
    <location>
        <begin position="1"/>
        <end position="23"/>
    </location>
</feature>
<organism>
    <name type="scientific">Phyllomedusa burmeisteri</name>
    <name type="common">Brazilian common walking leaf frog</name>
    <dbReference type="NCBI Taxonomy" id="39413"/>
    <lineage>
        <taxon>Eukaryota</taxon>
        <taxon>Metazoa</taxon>
        <taxon>Chordata</taxon>
        <taxon>Craniata</taxon>
        <taxon>Vertebrata</taxon>
        <taxon>Euteleostomi</taxon>
        <taxon>Amphibia</taxon>
        <taxon>Batrachia</taxon>
        <taxon>Anura</taxon>
        <taxon>Neobatrachia</taxon>
        <taxon>Hyloidea</taxon>
        <taxon>Hylidae</taxon>
        <taxon>Phyllomedusinae</taxon>
        <taxon>Phyllomedusa</taxon>
    </lineage>
</organism>
<dbReference type="GO" id="GO:0005576">
    <property type="term" value="C:extracellular region"/>
    <property type="evidence" value="ECO:0007669"/>
    <property type="project" value="UniProtKB-SubCell"/>
</dbReference>
<dbReference type="GO" id="GO:0042742">
    <property type="term" value="P:defense response to bacterium"/>
    <property type="evidence" value="ECO:0007669"/>
    <property type="project" value="UniProtKB-KW"/>
</dbReference>
<dbReference type="InterPro" id="IPR022731">
    <property type="entry name" value="Dermaseptin_dom"/>
</dbReference>
<dbReference type="Pfam" id="PF12121">
    <property type="entry name" value="DD_K"/>
    <property type="match status" value="1"/>
</dbReference>
<comment type="function">
    <text evidence="1">Possesses a potent antimicrobial activity against bacteria, fungi and protozoa. Probably acts by disturbing membrane functions with its amphipathic structure (By similarity).</text>
</comment>
<comment type="subcellular location">
    <subcellularLocation>
        <location evidence="3">Secreted</location>
    </subcellularLocation>
</comment>
<comment type="tissue specificity">
    <text evidence="3">Expressed by the skin glands.</text>
</comment>
<comment type="mass spectrometry" mass="2337.33" method="Electrospray" evidence="3"/>
<comment type="similarity">
    <text evidence="2">Belongs to the frog skin active peptide (FSAP) family. Dermaseptin subfamily.</text>
</comment>
<proteinExistence type="evidence at protein level"/>
<protein>
    <recommendedName>
        <fullName evidence="4">Dermaseptin III-like peptide</fullName>
    </recommendedName>
</protein>
<sequence length="23" mass="2339">ALWKNMLKGIGKLAGKAALGAVK</sequence>
<keyword id="KW-0878">Amphibian defense peptide</keyword>
<keyword id="KW-0044">Antibiotic</keyword>
<keyword id="KW-0929">Antimicrobial</keyword>
<keyword id="KW-0903">Direct protein sequencing</keyword>
<keyword id="KW-0964">Secreted</keyword>